<sequence>MGSLSPWHWAILAVVVIVLFGAKKLPDAARSLGKSLRIFKSEVRELQNENKAEASIETPTPVQSQRVDPSAASGQDSTEARPA</sequence>
<evidence type="ECO:0000255" key="1">
    <source>
        <dbReference type="HAMAP-Rule" id="MF_00236"/>
    </source>
</evidence>
<evidence type="ECO:0000256" key="2">
    <source>
        <dbReference type="SAM" id="MobiDB-lite"/>
    </source>
</evidence>
<reference key="1">
    <citation type="journal article" date="2009" name="Vaccine">
        <title>Whole genome sequence analysis of Mycobacterium bovis bacillus Calmette-Guerin (BCG) Tokyo 172: a comparative study of BCG vaccine substrains.</title>
        <authorList>
            <person name="Seki M."/>
            <person name="Honda I."/>
            <person name="Fujita I."/>
            <person name="Yano I."/>
            <person name="Yamamoto S."/>
            <person name="Koyama A."/>
        </authorList>
    </citation>
    <scope>NUCLEOTIDE SEQUENCE [LARGE SCALE GENOMIC DNA]</scope>
    <source>
        <strain>BCG / Tokyo 172 / ATCC 35737 / TMC 1019</strain>
    </source>
</reference>
<name>TATA_MYCBT</name>
<dbReference type="EMBL" id="AP010918">
    <property type="protein sequence ID" value="BAH26392.1"/>
    <property type="molecule type" value="Genomic_DNA"/>
</dbReference>
<dbReference type="RefSeq" id="WP_003410768.1">
    <property type="nucleotide sequence ID" value="NZ_CP014566.1"/>
</dbReference>
<dbReference type="SMR" id="C1AQ13"/>
<dbReference type="GeneID" id="45426071"/>
<dbReference type="KEGG" id="mbt:JTY_2108"/>
<dbReference type="HOGENOM" id="CLU_086034_4_2_11"/>
<dbReference type="GO" id="GO:0033281">
    <property type="term" value="C:TAT protein transport complex"/>
    <property type="evidence" value="ECO:0007669"/>
    <property type="project" value="UniProtKB-UniRule"/>
</dbReference>
<dbReference type="GO" id="GO:0008320">
    <property type="term" value="F:protein transmembrane transporter activity"/>
    <property type="evidence" value="ECO:0007669"/>
    <property type="project" value="UniProtKB-UniRule"/>
</dbReference>
<dbReference type="GO" id="GO:0043953">
    <property type="term" value="P:protein transport by the Tat complex"/>
    <property type="evidence" value="ECO:0007669"/>
    <property type="project" value="UniProtKB-UniRule"/>
</dbReference>
<dbReference type="Gene3D" id="1.20.5.3310">
    <property type="match status" value="1"/>
</dbReference>
<dbReference type="HAMAP" id="MF_00236">
    <property type="entry name" value="TatA_E"/>
    <property type="match status" value="1"/>
</dbReference>
<dbReference type="InterPro" id="IPR003369">
    <property type="entry name" value="TatA/B/E"/>
</dbReference>
<dbReference type="InterPro" id="IPR006312">
    <property type="entry name" value="TatA/E"/>
</dbReference>
<dbReference type="NCBIfam" id="NF001854">
    <property type="entry name" value="PRK00575.1"/>
    <property type="match status" value="1"/>
</dbReference>
<dbReference type="NCBIfam" id="TIGR01411">
    <property type="entry name" value="tatAE"/>
    <property type="match status" value="1"/>
</dbReference>
<dbReference type="PANTHER" id="PTHR42982">
    <property type="entry name" value="SEC-INDEPENDENT PROTEIN TRANSLOCASE PROTEIN TATA"/>
    <property type="match status" value="1"/>
</dbReference>
<dbReference type="PANTHER" id="PTHR42982:SF8">
    <property type="entry name" value="SEC-INDEPENDENT PROTEIN TRANSLOCASE PROTEIN TATA"/>
    <property type="match status" value="1"/>
</dbReference>
<dbReference type="Pfam" id="PF02416">
    <property type="entry name" value="TatA_B_E"/>
    <property type="match status" value="1"/>
</dbReference>
<feature type="chain" id="PRO_1000197884" description="Sec-independent protein translocase protein TatA">
    <location>
        <begin position="1"/>
        <end position="83"/>
    </location>
</feature>
<feature type="transmembrane region" description="Helical" evidence="1">
    <location>
        <begin position="1"/>
        <end position="21"/>
    </location>
</feature>
<feature type="region of interest" description="Disordered" evidence="2">
    <location>
        <begin position="48"/>
        <end position="83"/>
    </location>
</feature>
<feature type="compositionally biased region" description="Polar residues" evidence="2">
    <location>
        <begin position="57"/>
        <end position="77"/>
    </location>
</feature>
<proteinExistence type="inferred from homology"/>
<comment type="function">
    <text evidence="1">Part of the twin-arginine translocation (Tat) system that transports large folded proteins containing a characteristic twin-arginine motif in their signal peptide across membranes. TatA could form the protein-conducting channel of the Tat system.</text>
</comment>
<comment type="subunit">
    <text evidence="1">The Tat system comprises two distinct complexes: a TatABC complex, containing multiple copies of TatA, TatB and TatC subunits, and a separate TatA complex, containing only TatA subunits. Substrates initially bind to the TatABC complex, which probably triggers association of the separate TatA complex to form the active translocon.</text>
</comment>
<comment type="subcellular location">
    <subcellularLocation>
        <location evidence="1">Cell membrane</location>
        <topology evidence="1">Single-pass membrane protein</topology>
    </subcellularLocation>
</comment>
<comment type="similarity">
    <text evidence="1">Belongs to the TatA/E family.</text>
</comment>
<gene>
    <name evidence="1" type="primary">tatA</name>
    <name type="ordered locus">JTY_2108</name>
</gene>
<organism>
    <name type="scientific">Mycobacterium bovis (strain BCG / Tokyo 172 / ATCC 35737 / TMC 1019)</name>
    <dbReference type="NCBI Taxonomy" id="561275"/>
    <lineage>
        <taxon>Bacteria</taxon>
        <taxon>Bacillati</taxon>
        <taxon>Actinomycetota</taxon>
        <taxon>Actinomycetes</taxon>
        <taxon>Mycobacteriales</taxon>
        <taxon>Mycobacteriaceae</taxon>
        <taxon>Mycobacterium</taxon>
        <taxon>Mycobacterium tuberculosis complex</taxon>
    </lineage>
</organism>
<keyword id="KW-1003">Cell membrane</keyword>
<keyword id="KW-0472">Membrane</keyword>
<keyword id="KW-0653">Protein transport</keyword>
<keyword id="KW-0811">Translocation</keyword>
<keyword id="KW-0812">Transmembrane</keyword>
<keyword id="KW-1133">Transmembrane helix</keyword>
<keyword id="KW-0813">Transport</keyword>
<accession>C1AQ13</accession>
<protein>
    <recommendedName>
        <fullName evidence="1">Sec-independent protein translocase protein TatA</fullName>
    </recommendedName>
</protein>